<sequence>MALKNFNPTTPSQRQLVIVDRSGLYKGKPVKSLTEGLSSKGGRNNLGRITVRFQGGGHKRTYRLVDFKRRKFDVEGTVERLEYDPNRTAFIALITYADGEQAYILAPQRLAAGDKVIASDKAVDVKPGNAMPLQYVPVGSIVHNVELKPGKGGQVARSAGAYVQLVGRDAGMAILRLSSGEQRLVHGTCLATVGAVSNSDHGNINDGKAGRSRWRGKRPHVRGVVMNPVDHPHGGGEGRTSGGRHPVSPWGKPTKGKRTRSNKSTDKFIMRSRHQKKK</sequence>
<keyword id="KW-1185">Reference proteome</keyword>
<keyword id="KW-0687">Ribonucleoprotein</keyword>
<keyword id="KW-0689">Ribosomal protein</keyword>
<keyword id="KW-0694">RNA-binding</keyword>
<keyword id="KW-0699">rRNA-binding</keyword>
<accession>B9JVP0</accession>
<dbReference type="EMBL" id="CP000633">
    <property type="protein sequence ID" value="ACM36320.1"/>
    <property type="molecule type" value="Genomic_DNA"/>
</dbReference>
<dbReference type="RefSeq" id="WP_015915741.1">
    <property type="nucleotide sequence ID" value="NC_011989.1"/>
</dbReference>
<dbReference type="SMR" id="B9JVP0"/>
<dbReference type="STRING" id="311402.Avi_1843"/>
<dbReference type="GeneID" id="60682406"/>
<dbReference type="KEGG" id="avi:Avi_1843"/>
<dbReference type="eggNOG" id="COG0090">
    <property type="taxonomic scope" value="Bacteria"/>
</dbReference>
<dbReference type="HOGENOM" id="CLU_036235_2_1_5"/>
<dbReference type="Proteomes" id="UP000001596">
    <property type="component" value="Chromosome 1"/>
</dbReference>
<dbReference type="GO" id="GO:0015934">
    <property type="term" value="C:large ribosomal subunit"/>
    <property type="evidence" value="ECO:0007669"/>
    <property type="project" value="InterPro"/>
</dbReference>
<dbReference type="GO" id="GO:0019843">
    <property type="term" value="F:rRNA binding"/>
    <property type="evidence" value="ECO:0007669"/>
    <property type="project" value="UniProtKB-UniRule"/>
</dbReference>
<dbReference type="GO" id="GO:0003735">
    <property type="term" value="F:structural constituent of ribosome"/>
    <property type="evidence" value="ECO:0007669"/>
    <property type="project" value="InterPro"/>
</dbReference>
<dbReference type="GO" id="GO:0016740">
    <property type="term" value="F:transferase activity"/>
    <property type="evidence" value="ECO:0007669"/>
    <property type="project" value="InterPro"/>
</dbReference>
<dbReference type="GO" id="GO:0002181">
    <property type="term" value="P:cytoplasmic translation"/>
    <property type="evidence" value="ECO:0007669"/>
    <property type="project" value="TreeGrafter"/>
</dbReference>
<dbReference type="FunFam" id="2.30.30.30:FF:000001">
    <property type="entry name" value="50S ribosomal protein L2"/>
    <property type="match status" value="1"/>
</dbReference>
<dbReference type="FunFam" id="2.40.50.140:FF:000003">
    <property type="entry name" value="50S ribosomal protein L2"/>
    <property type="match status" value="1"/>
</dbReference>
<dbReference type="FunFam" id="4.10.950.10:FF:000001">
    <property type="entry name" value="50S ribosomal protein L2"/>
    <property type="match status" value="1"/>
</dbReference>
<dbReference type="Gene3D" id="2.30.30.30">
    <property type="match status" value="1"/>
</dbReference>
<dbReference type="Gene3D" id="2.40.50.140">
    <property type="entry name" value="Nucleic acid-binding proteins"/>
    <property type="match status" value="1"/>
</dbReference>
<dbReference type="Gene3D" id="4.10.950.10">
    <property type="entry name" value="Ribosomal protein L2, domain 3"/>
    <property type="match status" value="1"/>
</dbReference>
<dbReference type="HAMAP" id="MF_01320_B">
    <property type="entry name" value="Ribosomal_uL2_B"/>
    <property type="match status" value="1"/>
</dbReference>
<dbReference type="InterPro" id="IPR012340">
    <property type="entry name" value="NA-bd_OB-fold"/>
</dbReference>
<dbReference type="InterPro" id="IPR014722">
    <property type="entry name" value="Rib_uL2_dom2"/>
</dbReference>
<dbReference type="InterPro" id="IPR002171">
    <property type="entry name" value="Ribosomal_uL2"/>
</dbReference>
<dbReference type="InterPro" id="IPR005880">
    <property type="entry name" value="Ribosomal_uL2_bac/org-type"/>
</dbReference>
<dbReference type="InterPro" id="IPR022669">
    <property type="entry name" value="Ribosomal_uL2_C"/>
</dbReference>
<dbReference type="InterPro" id="IPR022671">
    <property type="entry name" value="Ribosomal_uL2_CS"/>
</dbReference>
<dbReference type="InterPro" id="IPR014726">
    <property type="entry name" value="Ribosomal_uL2_dom3"/>
</dbReference>
<dbReference type="InterPro" id="IPR022666">
    <property type="entry name" value="Ribosomal_uL2_RNA-bd_dom"/>
</dbReference>
<dbReference type="InterPro" id="IPR008991">
    <property type="entry name" value="Translation_prot_SH3-like_sf"/>
</dbReference>
<dbReference type="NCBIfam" id="TIGR01171">
    <property type="entry name" value="rplB_bact"/>
    <property type="match status" value="1"/>
</dbReference>
<dbReference type="PANTHER" id="PTHR13691:SF5">
    <property type="entry name" value="LARGE RIBOSOMAL SUBUNIT PROTEIN UL2M"/>
    <property type="match status" value="1"/>
</dbReference>
<dbReference type="PANTHER" id="PTHR13691">
    <property type="entry name" value="RIBOSOMAL PROTEIN L2"/>
    <property type="match status" value="1"/>
</dbReference>
<dbReference type="Pfam" id="PF00181">
    <property type="entry name" value="Ribosomal_L2"/>
    <property type="match status" value="1"/>
</dbReference>
<dbReference type="Pfam" id="PF03947">
    <property type="entry name" value="Ribosomal_L2_C"/>
    <property type="match status" value="1"/>
</dbReference>
<dbReference type="PIRSF" id="PIRSF002158">
    <property type="entry name" value="Ribosomal_L2"/>
    <property type="match status" value="1"/>
</dbReference>
<dbReference type="SMART" id="SM01383">
    <property type="entry name" value="Ribosomal_L2"/>
    <property type="match status" value="1"/>
</dbReference>
<dbReference type="SMART" id="SM01382">
    <property type="entry name" value="Ribosomal_L2_C"/>
    <property type="match status" value="1"/>
</dbReference>
<dbReference type="SUPFAM" id="SSF50249">
    <property type="entry name" value="Nucleic acid-binding proteins"/>
    <property type="match status" value="1"/>
</dbReference>
<dbReference type="SUPFAM" id="SSF50104">
    <property type="entry name" value="Translation proteins SH3-like domain"/>
    <property type="match status" value="1"/>
</dbReference>
<dbReference type="PROSITE" id="PS00467">
    <property type="entry name" value="RIBOSOMAL_L2"/>
    <property type="match status" value="1"/>
</dbReference>
<name>RL2_ALLAM</name>
<gene>
    <name evidence="1" type="primary">rplB</name>
    <name type="ordered locus">Avi_1843</name>
</gene>
<organism>
    <name type="scientific">Allorhizobium ampelinum (strain ATCC BAA-846 / DSM 112012 / S4)</name>
    <name type="common">Agrobacterium vitis (strain S4)</name>
    <dbReference type="NCBI Taxonomy" id="311402"/>
    <lineage>
        <taxon>Bacteria</taxon>
        <taxon>Pseudomonadati</taxon>
        <taxon>Pseudomonadota</taxon>
        <taxon>Alphaproteobacteria</taxon>
        <taxon>Hyphomicrobiales</taxon>
        <taxon>Rhizobiaceae</taxon>
        <taxon>Rhizobium/Agrobacterium group</taxon>
        <taxon>Allorhizobium</taxon>
        <taxon>Allorhizobium ampelinum</taxon>
    </lineage>
</organism>
<proteinExistence type="inferred from homology"/>
<reference key="1">
    <citation type="journal article" date="2009" name="J. Bacteriol.">
        <title>Genome sequences of three Agrobacterium biovars help elucidate the evolution of multichromosome genomes in bacteria.</title>
        <authorList>
            <person name="Slater S.C."/>
            <person name="Goldman B.S."/>
            <person name="Goodner B."/>
            <person name="Setubal J.C."/>
            <person name="Farrand S.K."/>
            <person name="Nester E.W."/>
            <person name="Burr T.J."/>
            <person name="Banta L."/>
            <person name="Dickerman A.W."/>
            <person name="Paulsen I."/>
            <person name="Otten L."/>
            <person name="Suen G."/>
            <person name="Welch R."/>
            <person name="Almeida N.F."/>
            <person name="Arnold F."/>
            <person name="Burton O.T."/>
            <person name="Du Z."/>
            <person name="Ewing A."/>
            <person name="Godsy E."/>
            <person name="Heisel S."/>
            <person name="Houmiel K.L."/>
            <person name="Jhaveri J."/>
            <person name="Lu J."/>
            <person name="Miller N.M."/>
            <person name="Norton S."/>
            <person name="Chen Q."/>
            <person name="Phoolcharoen W."/>
            <person name="Ohlin V."/>
            <person name="Ondrusek D."/>
            <person name="Pride N."/>
            <person name="Stricklin S.L."/>
            <person name="Sun J."/>
            <person name="Wheeler C."/>
            <person name="Wilson L."/>
            <person name="Zhu H."/>
            <person name="Wood D.W."/>
        </authorList>
    </citation>
    <scope>NUCLEOTIDE SEQUENCE [LARGE SCALE GENOMIC DNA]</scope>
    <source>
        <strain>ATCC BAA-846 / DSM 112012 / S4</strain>
    </source>
</reference>
<feature type="chain" id="PRO_1000165714" description="Large ribosomal subunit protein uL2">
    <location>
        <begin position="1"/>
        <end position="278"/>
    </location>
</feature>
<feature type="region of interest" description="Disordered" evidence="2">
    <location>
        <begin position="201"/>
        <end position="278"/>
    </location>
</feature>
<feature type="compositionally biased region" description="Basic residues" evidence="2">
    <location>
        <begin position="210"/>
        <end position="221"/>
    </location>
</feature>
<evidence type="ECO:0000255" key="1">
    <source>
        <dbReference type="HAMAP-Rule" id="MF_01320"/>
    </source>
</evidence>
<evidence type="ECO:0000256" key="2">
    <source>
        <dbReference type="SAM" id="MobiDB-lite"/>
    </source>
</evidence>
<evidence type="ECO:0000305" key="3"/>
<comment type="function">
    <text evidence="1">One of the primary rRNA binding proteins. Required for association of the 30S and 50S subunits to form the 70S ribosome, for tRNA binding and peptide bond formation. It has been suggested to have peptidyltransferase activity; this is somewhat controversial. Makes several contacts with the 16S rRNA in the 70S ribosome.</text>
</comment>
<comment type="subunit">
    <text evidence="1">Part of the 50S ribosomal subunit. Forms a bridge to the 30S subunit in the 70S ribosome.</text>
</comment>
<comment type="similarity">
    <text evidence="1">Belongs to the universal ribosomal protein uL2 family.</text>
</comment>
<protein>
    <recommendedName>
        <fullName evidence="1">Large ribosomal subunit protein uL2</fullName>
    </recommendedName>
    <alternativeName>
        <fullName evidence="3">50S ribosomal protein L2</fullName>
    </alternativeName>
</protein>